<keyword id="KW-0002">3D-structure</keyword>
<keyword id="KW-0965">Cell junction</keyword>
<keyword id="KW-1003">Cell membrane</keyword>
<keyword id="KW-0963">Cytoplasm</keyword>
<keyword id="KW-0256">Endoplasmic reticulum</keyword>
<keyword id="KW-0472">Membrane</keyword>
<keyword id="KW-0597">Phosphoprotein</keyword>
<keyword id="KW-1185">Reference proteome</keyword>
<keyword id="KW-0677">Repeat</keyword>
<keyword id="KW-0728">SH3 domain</keyword>
<keyword id="KW-0770">Synapse</keyword>
<keyword id="KW-0832">Ubl conjugation</keyword>
<protein>
    <recommendedName>
        <fullName evidence="28">Disks large homolog 1</fullName>
    </recommendedName>
    <alternativeName>
        <fullName>Synapse-associated protein 97</fullName>
        <shortName>SAP-97</shortName>
        <shortName>SAP97</shortName>
    </alternativeName>
</protein>
<dbReference type="EMBL" id="U14950">
    <property type="protein sequence ID" value="AAA79976.1"/>
    <property type="molecule type" value="mRNA"/>
</dbReference>
<dbReference type="PIR" id="I56552">
    <property type="entry name" value="I56552"/>
</dbReference>
<dbReference type="RefSeq" id="NP_036920.1">
    <property type="nucleotide sequence ID" value="NM_012788.1"/>
</dbReference>
<dbReference type="PDB" id="1RSO">
    <property type="method" value="NMR"/>
    <property type="chains" value="A/C=4-63"/>
</dbReference>
<dbReference type="PDB" id="1ZOK">
    <property type="method" value="NMR"/>
    <property type="chains" value="A=221-313"/>
</dbReference>
<dbReference type="PDB" id="2AWU">
    <property type="method" value="X-ray"/>
    <property type="resolution" value="2.44 A"/>
    <property type="chains" value="A/B=314-409"/>
</dbReference>
<dbReference type="PDB" id="2AWW">
    <property type="method" value="X-ray"/>
    <property type="resolution" value="2.21 A"/>
    <property type="chains" value="A/B=314-409"/>
</dbReference>
<dbReference type="PDB" id="2AWX">
    <property type="method" value="X-ray"/>
    <property type="resolution" value="1.80 A"/>
    <property type="chains" value="A/B=314-409"/>
</dbReference>
<dbReference type="PDB" id="2G2L">
    <property type="method" value="X-ray"/>
    <property type="resolution" value="2.35 A"/>
    <property type="chains" value="A/B=314-409"/>
</dbReference>
<dbReference type="PDB" id="2I0I">
    <property type="method" value="X-ray"/>
    <property type="resolution" value="2.80 A"/>
    <property type="chains" value="A/B/C=459-543"/>
</dbReference>
<dbReference type="PDB" id="2I0L">
    <property type="method" value="X-ray"/>
    <property type="resolution" value="2.31 A"/>
    <property type="chains" value="A/B=318-401"/>
</dbReference>
<dbReference type="PDB" id="3UAT">
    <property type="method" value="X-ray"/>
    <property type="resolution" value="2.70 A"/>
    <property type="chains" value="A=578-911"/>
</dbReference>
<dbReference type="PDBsum" id="1RSO"/>
<dbReference type="PDBsum" id="1ZOK"/>
<dbReference type="PDBsum" id="2AWU"/>
<dbReference type="PDBsum" id="2AWW"/>
<dbReference type="PDBsum" id="2AWX"/>
<dbReference type="PDBsum" id="2G2L"/>
<dbReference type="PDBsum" id="2I0I"/>
<dbReference type="PDBsum" id="2I0L"/>
<dbReference type="PDBsum" id="3UAT"/>
<dbReference type="BMRB" id="Q62696"/>
<dbReference type="SMR" id="Q62696"/>
<dbReference type="BioGRID" id="247292">
    <property type="interactions" value="19"/>
</dbReference>
<dbReference type="CORUM" id="Q62696"/>
<dbReference type="DIP" id="DIP-31527N"/>
<dbReference type="ELM" id="Q62696"/>
<dbReference type="FunCoup" id="Q62696">
    <property type="interactions" value="3423"/>
</dbReference>
<dbReference type="IntAct" id="Q62696">
    <property type="interactions" value="37"/>
</dbReference>
<dbReference type="MINT" id="Q62696"/>
<dbReference type="STRING" id="10116.ENSRNOP00000071898"/>
<dbReference type="GlyGen" id="Q62696">
    <property type="glycosylation" value="1 site"/>
</dbReference>
<dbReference type="iPTMnet" id="Q62696"/>
<dbReference type="PhosphoSitePlus" id="Q62696"/>
<dbReference type="SwissPalm" id="Q62696"/>
<dbReference type="jPOST" id="Q62696"/>
<dbReference type="PaxDb" id="10116-ENSRNOP00000055672"/>
<dbReference type="ABCD" id="Q62696">
    <property type="antibodies" value="2 sequenced antibodies"/>
</dbReference>
<dbReference type="GeneID" id="25252"/>
<dbReference type="KEGG" id="rno:25252"/>
<dbReference type="UCSC" id="RGD:2505">
    <property type="organism name" value="rat"/>
</dbReference>
<dbReference type="AGR" id="RGD:2505"/>
<dbReference type="CTD" id="1739"/>
<dbReference type="RGD" id="2505">
    <property type="gene designation" value="Dlg1"/>
</dbReference>
<dbReference type="eggNOG" id="KOG0708">
    <property type="taxonomic scope" value="Eukaryota"/>
</dbReference>
<dbReference type="InParanoid" id="Q62696"/>
<dbReference type="PhylomeDB" id="Q62696"/>
<dbReference type="BRENDA" id="2.7.4.8">
    <property type="organism ID" value="5301"/>
</dbReference>
<dbReference type="Reactome" id="R-RNO-399719">
    <property type="pathway name" value="Trafficking of AMPA receptors"/>
</dbReference>
<dbReference type="Reactome" id="R-RNO-438066">
    <property type="pathway name" value="Unblocking of NMDA receptors, glutamate binding and activation"/>
</dbReference>
<dbReference type="Reactome" id="R-RNO-451308">
    <property type="pathway name" value="Activation of Ca-permeable Kainate Receptor"/>
</dbReference>
<dbReference type="Reactome" id="R-RNO-5673001">
    <property type="pathway name" value="RAF/MAP kinase cascade"/>
</dbReference>
<dbReference type="Reactome" id="R-RNO-8849932">
    <property type="pathway name" value="Synaptic adhesion-like molecules"/>
</dbReference>
<dbReference type="EvolutionaryTrace" id="Q62696"/>
<dbReference type="PRO" id="PR:Q62696"/>
<dbReference type="Proteomes" id="UP000002494">
    <property type="component" value="Unplaced"/>
</dbReference>
<dbReference type="GO" id="GO:0016324">
    <property type="term" value="C:apical plasma membrane"/>
    <property type="evidence" value="ECO:0007669"/>
    <property type="project" value="UniProtKB-SubCell"/>
</dbReference>
<dbReference type="GO" id="GO:0009925">
    <property type="term" value="C:basal plasma membrane"/>
    <property type="evidence" value="ECO:0000314"/>
    <property type="project" value="RGD"/>
</dbReference>
<dbReference type="GO" id="GO:0005604">
    <property type="term" value="C:basement membrane"/>
    <property type="evidence" value="ECO:0000266"/>
    <property type="project" value="RGD"/>
</dbReference>
<dbReference type="GO" id="GO:0016323">
    <property type="term" value="C:basolateral plasma membrane"/>
    <property type="evidence" value="ECO:0000314"/>
    <property type="project" value="UniProtKB"/>
</dbReference>
<dbReference type="GO" id="GO:0005923">
    <property type="term" value="C:bicellular tight junction"/>
    <property type="evidence" value="ECO:0000266"/>
    <property type="project" value="RGD"/>
</dbReference>
<dbReference type="GO" id="GO:0030054">
    <property type="term" value="C:cell junction"/>
    <property type="evidence" value="ECO:0000266"/>
    <property type="project" value="RGD"/>
</dbReference>
<dbReference type="GO" id="GO:0031253">
    <property type="term" value="C:cell projection membrane"/>
    <property type="evidence" value="ECO:0000266"/>
    <property type="project" value="RGD"/>
</dbReference>
<dbReference type="GO" id="GO:0005911">
    <property type="term" value="C:cell-cell junction"/>
    <property type="evidence" value="ECO:0000266"/>
    <property type="project" value="RGD"/>
</dbReference>
<dbReference type="GO" id="GO:0005737">
    <property type="term" value="C:cytoplasm"/>
    <property type="evidence" value="ECO:0000266"/>
    <property type="project" value="RGD"/>
</dbReference>
<dbReference type="GO" id="GO:0009898">
    <property type="term" value="C:cytoplasmic side of plasma membrane"/>
    <property type="evidence" value="ECO:0000266"/>
    <property type="project" value="RGD"/>
</dbReference>
<dbReference type="GO" id="GO:0005829">
    <property type="term" value="C:cytosol"/>
    <property type="evidence" value="ECO:0000314"/>
    <property type="project" value="MGI"/>
</dbReference>
<dbReference type="GO" id="GO:0030425">
    <property type="term" value="C:dendrite"/>
    <property type="evidence" value="ECO:0000314"/>
    <property type="project" value="SynGO-UCL"/>
</dbReference>
<dbReference type="GO" id="GO:0005783">
    <property type="term" value="C:endoplasmic reticulum"/>
    <property type="evidence" value="ECO:0000266"/>
    <property type="project" value="RGD"/>
</dbReference>
<dbReference type="GO" id="GO:0005789">
    <property type="term" value="C:endoplasmic reticulum membrane"/>
    <property type="evidence" value="ECO:0000304"/>
    <property type="project" value="Reactome"/>
</dbReference>
<dbReference type="GO" id="GO:0098978">
    <property type="term" value="C:glutamatergic synapse"/>
    <property type="evidence" value="ECO:0000314"/>
    <property type="project" value="SynGO"/>
</dbReference>
<dbReference type="GO" id="GO:0005794">
    <property type="term" value="C:Golgi apparatus"/>
    <property type="evidence" value="ECO:0000266"/>
    <property type="project" value="RGD"/>
</dbReference>
<dbReference type="GO" id="GO:0001772">
    <property type="term" value="C:immunological synapse"/>
    <property type="evidence" value="ECO:0000266"/>
    <property type="project" value="RGD"/>
</dbReference>
<dbReference type="GO" id="GO:0043219">
    <property type="term" value="C:lateral loop"/>
    <property type="evidence" value="ECO:0000266"/>
    <property type="project" value="RGD"/>
</dbReference>
<dbReference type="GO" id="GO:0016328">
    <property type="term" value="C:lateral plasma membrane"/>
    <property type="evidence" value="ECO:0000314"/>
    <property type="project" value="UniProtKB"/>
</dbReference>
<dbReference type="GO" id="GO:0045121">
    <property type="term" value="C:membrane raft"/>
    <property type="evidence" value="ECO:0000266"/>
    <property type="project" value="RGD"/>
</dbReference>
<dbReference type="GO" id="GO:0005874">
    <property type="term" value="C:microtubule"/>
    <property type="evidence" value="ECO:0000266"/>
    <property type="project" value="RGD"/>
</dbReference>
<dbReference type="GO" id="GO:0005902">
    <property type="term" value="C:microvillus"/>
    <property type="evidence" value="ECO:0000314"/>
    <property type="project" value="MGI"/>
</dbReference>
<dbReference type="GO" id="GO:0097025">
    <property type="term" value="C:MPP7-DLG1-LIN7 complex"/>
    <property type="evidence" value="ECO:0000266"/>
    <property type="project" value="RGD"/>
</dbReference>
<dbReference type="GO" id="GO:0035748">
    <property type="term" value="C:myelin sheath abaxonal region"/>
    <property type="evidence" value="ECO:0000266"/>
    <property type="project" value="RGD"/>
</dbReference>
<dbReference type="GO" id="GO:0031594">
    <property type="term" value="C:neuromuscular junction"/>
    <property type="evidence" value="ECO:0000266"/>
    <property type="project" value="RGD"/>
</dbReference>
<dbReference type="GO" id="GO:0043005">
    <property type="term" value="C:neuron projection"/>
    <property type="evidence" value="ECO:0000318"/>
    <property type="project" value="GO_Central"/>
</dbReference>
<dbReference type="GO" id="GO:0043025">
    <property type="term" value="C:neuronal cell body"/>
    <property type="evidence" value="ECO:0000314"/>
    <property type="project" value="UniProtKB"/>
</dbReference>
<dbReference type="GO" id="GO:0033268">
    <property type="term" value="C:node of Ranvier"/>
    <property type="evidence" value="ECO:0000266"/>
    <property type="project" value="RGD"/>
</dbReference>
<dbReference type="GO" id="GO:0005634">
    <property type="term" value="C:nucleus"/>
    <property type="evidence" value="ECO:0000266"/>
    <property type="project" value="RGD"/>
</dbReference>
<dbReference type="GO" id="GO:0033270">
    <property type="term" value="C:paranode region of axon"/>
    <property type="evidence" value="ECO:0000314"/>
    <property type="project" value="MGI"/>
</dbReference>
<dbReference type="GO" id="GO:0048471">
    <property type="term" value="C:perinuclear region of cytoplasm"/>
    <property type="evidence" value="ECO:0000266"/>
    <property type="project" value="RGD"/>
</dbReference>
<dbReference type="GO" id="GO:0005886">
    <property type="term" value="C:plasma membrane"/>
    <property type="evidence" value="ECO:0000266"/>
    <property type="project" value="RGD"/>
</dbReference>
<dbReference type="GO" id="GO:0014069">
    <property type="term" value="C:postsynaptic density"/>
    <property type="evidence" value="ECO:0000314"/>
    <property type="project" value="SynGO-UCL"/>
</dbReference>
<dbReference type="GO" id="GO:0098839">
    <property type="term" value="C:postsynaptic density membrane"/>
    <property type="evidence" value="ECO:0000318"/>
    <property type="project" value="GO_Central"/>
</dbReference>
<dbReference type="GO" id="GO:0099092">
    <property type="term" value="C:postsynaptic density, intracellular component"/>
    <property type="evidence" value="ECO:0000314"/>
    <property type="project" value="SynGO"/>
</dbReference>
<dbReference type="GO" id="GO:0045211">
    <property type="term" value="C:postsynaptic membrane"/>
    <property type="evidence" value="ECO:0000304"/>
    <property type="project" value="RGD"/>
</dbReference>
<dbReference type="GO" id="GO:0042734">
    <property type="term" value="C:presynaptic membrane"/>
    <property type="evidence" value="ECO:0000314"/>
    <property type="project" value="RGD"/>
</dbReference>
<dbReference type="GO" id="GO:0045202">
    <property type="term" value="C:synapse"/>
    <property type="evidence" value="ECO:0000266"/>
    <property type="project" value="RGD"/>
</dbReference>
<dbReference type="GO" id="GO:0097060">
    <property type="term" value="C:synaptic membrane"/>
    <property type="evidence" value="ECO:0000266"/>
    <property type="project" value="RGD"/>
</dbReference>
<dbReference type="GO" id="GO:0030672">
    <property type="term" value="C:synaptic vesicle membrane"/>
    <property type="evidence" value="ECO:0000314"/>
    <property type="project" value="UniProtKB"/>
</dbReference>
<dbReference type="GO" id="GO:0030315">
    <property type="term" value="C:T-tubule"/>
    <property type="evidence" value="ECO:0000314"/>
    <property type="project" value="RGD"/>
</dbReference>
<dbReference type="GO" id="GO:0035255">
    <property type="term" value="F:ionotropic glutamate receptor binding"/>
    <property type="evidence" value="ECO:0000353"/>
    <property type="project" value="RGD"/>
</dbReference>
<dbReference type="GO" id="GO:0019900">
    <property type="term" value="F:kinase binding"/>
    <property type="evidence" value="ECO:0000266"/>
    <property type="project" value="RGD"/>
</dbReference>
<dbReference type="GO" id="GO:0019894">
    <property type="term" value="F:kinesin binding"/>
    <property type="evidence" value="ECO:0000353"/>
    <property type="project" value="RGD"/>
</dbReference>
<dbReference type="GO" id="GO:0097016">
    <property type="term" value="F:L27 domain binding"/>
    <property type="evidence" value="ECO:0000266"/>
    <property type="project" value="RGD"/>
</dbReference>
<dbReference type="GO" id="GO:0060090">
    <property type="term" value="F:molecular adaptor activity"/>
    <property type="evidence" value="ECO:0000266"/>
    <property type="project" value="RGD"/>
</dbReference>
<dbReference type="GO" id="GO:0030165">
    <property type="term" value="F:PDZ domain binding"/>
    <property type="evidence" value="ECO:0000353"/>
    <property type="project" value="RGD"/>
</dbReference>
<dbReference type="GO" id="GO:0019902">
    <property type="term" value="F:phosphatase binding"/>
    <property type="evidence" value="ECO:0000250"/>
    <property type="project" value="UniProtKB"/>
</dbReference>
<dbReference type="GO" id="GO:0015459">
    <property type="term" value="F:potassium channel regulator activity"/>
    <property type="evidence" value="ECO:0000266"/>
    <property type="project" value="RGD"/>
</dbReference>
<dbReference type="GO" id="GO:0019901">
    <property type="term" value="F:protein kinase binding"/>
    <property type="evidence" value="ECO:0000353"/>
    <property type="project" value="RGD"/>
</dbReference>
<dbReference type="GO" id="GO:0098919">
    <property type="term" value="F:structural constituent of postsynaptic density"/>
    <property type="evidence" value="ECO:0000266"/>
    <property type="project" value="RGD"/>
</dbReference>
<dbReference type="GO" id="GO:0044325">
    <property type="term" value="F:transmembrane transporter binding"/>
    <property type="evidence" value="ECO:0000353"/>
    <property type="project" value="RGD"/>
</dbReference>
<dbReference type="GO" id="GO:0007015">
    <property type="term" value="P:actin filament organization"/>
    <property type="evidence" value="ECO:0000250"/>
    <property type="project" value="UniProtKB"/>
</dbReference>
<dbReference type="GO" id="GO:0030041">
    <property type="term" value="P:actin filament polymerization"/>
    <property type="evidence" value="ECO:0000266"/>
    <property type="project" value="RGD"/>
</dbReference>
<dbReference type="GO" id="GO:0042982">
    <property type="term" value="P:amyloid precursor protein metabolic process"/>
    <property type="evidence" value="ECO:0000266"/>
    <property type="project" value="RGD"/>
</dbReference>
<dbReference type="GO" id="GO:0030953">
    <property type="term" value="P:astral microtubule organization"/>
    <property type="evidence" value="ECO:0000266"/>
    <property type="project" value="RGD"/>
</dbReference>
<dbReference type="GO" id="GO:0070830">
    <property type="term" value="P:bicellular tight junction assembly"/>
    <property type="evidence" value="ECO:0000266"/>
    <property type="project" value="RGD"/>
</dbReference>
<dbReference type="GO" id="GO:0001658">
    <property type="term" value="P:branching involved in ureteric bud morphogenesis"/>
    <property type="evidence" value="ECO:0000266"/>
    <property type="project" value="RGD"/>
</dbReference>
<dbReference type="GO" id="GO:0007155">
    <property type="term" value="P:cell adhesion"/>
    <property type="evidence" value="ECO:0000270"/>
    <property type="project" value="RGD"/>
</dbReference>
<dbReference type="GO" id="GO:0008283">
    <property type="term" value="P:cell population proliferation"/>
    <property type="evidence" value="ECO:0000266"/>
    <property type="project" value="RGD"/>
</dbReference>
<dbReference type="GO" id="GO:0098609">
    <property type="term" value="P:cell-cell adhesion"/>
    <property type="evidence" value="ECO:0000250"/>
    <property type="project" value="UniProtKB"/>
</dbReference>
<dbReference type="GO" id="GO:1990416">
    <property type="term" value="P:cellular response to brain-derived neurotrophic factor stimulus"/>
    <property type="evidence" value="ECO:0000314"/>
    <property type="project" value="RGD"/>
</dbReference>
<dbReference type="GO" id="GO:0021987">
    <property type="term" value="P:cerebral cortex development"/>
    <property type="evidence" value="ECO:0000270"/>
    <property type="project" value="RGD"/>
</dbReference>
<dbReference type="GO" id="GO:0007268">
    <property type="term" value="P:chemical synaptic transmission"/>
    <property type="evidence" value="ECO:0000318"/>
    <property type="project" value="GO_Central"/>
</dbReference>
<dbReference type="GO" id="GO:0030866">
    <property type="term" value="P:cortical actin cytoskeleton organization"/>
    <property type="evidence" value="ECO:0000250"/>
    <property type="project" value="UniProtKB"/>
</dbReference>
<dbReference type="GO" id="GO:0043622">
    <property type="term" value="P:cortical microtubule organization"/>
    <property type="evidence" value="ECO:0000266"/>
    <property type="project" value="RGD"/>
</dbReference>
<dbReference type="GO" id="GO:0048704">
    <property type="term" value="P:embryonic skeletal system morphogenesis"/>
    <property type="evidence" value="ECO:0000266"/>
    <property type="project" value="RGD"/>
</dbReference>
<dbReference type="GO" id="GO:0001935">
    <property type="term" value="P:endothelial cell proliferation"/>
    <property type="evidence" value="ECO:0000250"/>
    <property type="project" value="UniProtKB"/>
</dbReference>
<dbReference type="GO" id="GO:0010669">
    <property type="term" value="P:epithelial structure maintenance"/>
    <property type="evidence" value="ECO:0000250"/>
    <property type="project" value="UniProtKB"/>
</dbReference>
<dbReference type="GO" id="GO:0051660">
    <property type="term" value="P:establishment of centrosome localization"/>
    <property type="evidence" value="ECO:0000266"/>
    <property type="project" value="RGD"/>
</dbReference>
<dbReference type="GO" id="GO:0045197">
    <property type="term" value="P:establishment or maintenance of epithelial cell apical/basal polarity"/>
    <property type="evidence" value="ECO:0000318"/>
    <property type="project" value="GO_Central"/>
</dbReference>
<dbReference type="GO" id="GO:0060022">
    <property type="term" value="P:hard palate development"/>
    <property type="evidence" value="ECO:0000266"/>
    <property type="project" value="RGD"/>
</dbReference>
<dbReference type="GO" id="GO:0001771">
    <property type="term" value="P:immunological synapse formation"/>
    <property type="evidence" value="ECO:0000266"/>
    <property type="project" value="RGD"/>
</dbReference>
<dbReference type="GO" id="GO:0002088">
    <property type="term" value="P:lens development in camera-type eye"/>
    <property type="evidence" value="ECO:0000266"/>
    <property type="project" value="RGD"/>
</dbReference>
<dbReference type="GO" id="GO:0031579">
    <property type="term" value="P:membrane raft organization"/>
    <property type="evidence" value="ECO:0000266"/>
    <property type="project" value="RGD"/>
</dbReference>
<dbReference type="GO" id="GO:0098915">
    <property type="term" value="P:membrane repolarization during ventricular cardiac muscle cell action potential"/>
    <property type="evidence" value="ECO:0000266"/>
    <property type="project" value="RGD"/>
</dbReference>
<dbReference type="GO" id="GO:0050680">
    <property type="term" value="P:negative regulation of epithelial cell proliferation"/>
    <property type="evidence" value="ECO:0000266"/>
    <property type="project" value="RGD"/>
</dbReference>
<dbReference type="GO" id="GO:0070373">
    <property type="term" value="P:negative regulation of ERK1 and ERK2 cascade"/>
    <property type="evidence" value="ECO:0000266"/>
    <property type="project" value="RGD"/>
</dbReference>
<dbReference type="GO" id="GO:2000134">
    <property type="term" value="P:negative regulation of G1/S transition of mitotic cell cycle"/>
    <property type="evidence" value="ECO:0000250"/>
    <property type="project" value="UniProtKB"/>
</dbReference>
<dbReference type="GO" id="GO:1903753">
    <property type="term" value="P:negative regulation of p38MAPK cascade"/>
    <property type="evidence" value="ECO:0000266"/>
    <property type="project" value="RGD"/>
</dbReference>
<dbReference type="GO" id="GO:0051898">
    <property type="term" value="P:negative regulation of phosphatidylinositol 3-kinase/protein kinase B signal transduction"/>
    <property type="evidence" value="ECO:0000266"/>
    <property type="project" value="RGD"/>
</dbReference>
<dbReference type="GO" id="GO:0042130">
    <property type="term" value="P:negative regulation of T cell proliferation"/>
    <property type="evidence" value="ECO:0000266"/>
    <property type="project" value="RGD"/>
</dbReference>
<dbReference type="GO" id="GO:0000122">
    <property type="term" value="P:negative regulation of transcription by RNA polymerase II"/>
    <property type="evidence" value="ECO:0000266"/>
    <property type="project" value="RGD"/>
</dbReference>
<dbReference type="GO" id="GO:0007399">
    <property type="term" value="P:nervous system development"/>
    <property type="evidence" value="ECO:0000318"/>
    <property type="project" value="GO_Central"/>
</dbReference>
<dbReference type="GO" id="GO:0099645">
    <property type="term" value="P:neurotransmitter receptor localization to postsynaptic specialization membrane"/>
    <property type="evidence" value="ECO:0000314"/>
    <property type="project" value="SynGO"/>
</dbReference>
<dbReference type="GO" id="GO:0030432">
    <property type="term" value="P:peristalsis"/>
    <property type="evidence" value="ECO:0000266"/>
    <property type="project" value="RGD"/>
</dbReference>
<dbReference type="GO" id="GO:0043491">
    <property type="term" value="P:phosphatidylinositol 3-kinase/protein kinase B signal transduction"/>
    <property type="evidence" value="ECO:0000266"/>
    <property type="project" value="RGD"/>
</dbReference>
<dbReference type="GO" id="GO:0030838">
    <property type="term" value="P:positive regulation of actin filament polymerization"/>
    <property type="evidence" value="ECO:0000266"/>
    <property type="project" value="RGD"/>
</dbReference>
<dbReference type="GO" id="GO:0008284">
    <property type="term" value="P:positive regulation of cell population proliferation"/>
    <property type="evidence" value="ECO:0000266"/>
    <property type="project" value="RGD"/>
</dbReference>
<dbReference type="GO" id="GO:0010628">
    <property type="term" value="P:positive regulation of gene expression"/>
    <property type="evidence" value="ECO:0000314"/>
    <property type="project" value="RGD"/>
</dbReference>
<dbReference type="GO" id="GO:0043268">
    <property type="term" value="P:positive regulation of potassium ion transport"/>
    <property type="evidence" value="ECO:0000315"/>
    <property type="project" value="RGD"/>
</dbReference>
<dbReference type="GO" id="GO:1903078">
    <property type="term" value="P:positive regulation of protein localization to plasma membrane"/>
    <property type="evidence" value="ECO:0000266"/>
    <property type="project" value="RGD"/>
</dbReference>
<dbReference type="GO" id="GO:0008104">
    <property type="term" value="P:protein localization"/>
    <property type="evidence" value="ECO:0000266"/>
    <property type="project" value="RGD"/>
</dbReference>
<dbReference type="GO" id="GO:0072659">
    <property type="term" value="P:protein localization to plasma membrane"/>
    <property type="evidence" value="ECO:0000266"/>
    <property type="project" value="RGD"/>
</dbReference>
<dbReference type="GO" id="GO:0035418">
    <property type="term" value="P:protein localization to synapse"/>
    <property type="evidence" value="ECO:0000318"/>
    <property type="project" value="GO_Central"/>
</dbReference>
<dbReference type="GO" id="GO:0031503">
    <property type="term" value="P:protein-containing complex localization"/>
    <property type="evidence" value="ECO:0000266"/>
    <property type="project" value="RGD"/>
</dbReference>
<dbReference type="GO" id="GO:0043113">
    <property type="term" value="P:receptor clustering"/>
    <property type="evidence" value="ECO:0000318"/>
    <property type="project" value="GO_Central"/>
</dbReference>
<dbReference type="GO" id="GO:0097120">
    <property type="term" value="P:receptor localization to synapse"/>
    <property type="evidence" value="ECO:0000318"/>
    <property type="project" value="GO_Central"/>
</dbReference>
<dbReference type="GO" id="GO:0008360">
    <property type="term" value="P:regulation of cell shape"/>
    <property type="evidence" value="ECO:0000266"/>
    <property type="project" value="RGD"/>
</dbReference>
<dbReference type="GO" id="GO:0042391">
    <property type="term" value="P:regulation of membrane potential"/>
    <property type="evidence" value="ECO:0000266"/>
    <property type="project" value="RGD"/>
</dbReference>
<dbReference type="GO" id="GO:0031641">
    <property type="term" value="P:regulation of myelination"/>
    <property type="evidence" value="ECO:0000266"/>
    <property type="project" value="RGD"/>
</dbReference>
<dbReference type="GO" id="GO:0099072">
    <property type="term" value="P:regulation of postsynaptic membrane neurotransmitter receptor levels"/>
    <property type="evidence" value="ECO:0000318"/>
    <property type="project" value="GO_Central"/>
</dbReference>
<dbReference type="GO" id="GO:1903764">
    <property type="term" value="P:regulation of potassium ion export across plasma membrane"/>
    <property type="evidence" value="ECO:0000266"/>
    <property type="project" value="RGD"/>
</dbReference>
<dbReference type="GO" id="GO:1903286">
    <property type="term" value="P:regulation of potassium ion import"/>
    <property type="evidence" value="ECO:0000266"/>
    <property type="project" value="RGD"/>
</dbReference>
<dbReference type="GO" id="GO:0032880">
    <property type="term" value="P:regulation of protein localization"/>
    <property type="evidence" value="ECO:0000315"/>
    <property type="project" value="RGD"/>
</dbReference>
<dbReference type="GO" id="GO:1902473">
    <property type="term" value="P:regulation of protein localization to synapse"/>
    <property type="evidence" value="ECO:0000266"/>
    <property type="project" value="RGD"/>
</dbReference>
<dbReference type="GO" id="GO:0098911">
    <property type="term" value="P:regulation of ventricular cardiac muscle cell action potential"/>
    <property type="evidence" value="ECO:0000266"/>
    <property type="project" value="RGD"/>
</dbReference>
<dbReference type="GO" id="GO:0048608">
    <property type="term" value="P:reproductive structure development"/>
    <property type="evidence" value="ECO:0000266"/>
    <property type="project" value="RGD"/>
</dbReference>
<dbReference type="GO" id="GO:0048745">
    <property type="term" value="P:smooth muscle tissue development"/>
    <property type="evidence" value="ECO:0000266"/>
    <property type="project" value="RGD"/>
</dbReference>
<dbReference type="GO" id="GO:0042110">
    <property type="term" value="P:T cell activation"/>
    <property type="evidence" value="ECO:0000266"/>
    <property type="project" value="RGD"/>
</dbReference>
<dbReference type="GO" id="GO:0042098">
    <property type="term" value="P:T cell proliferation"/>
    <property type="evidence" value="ECO:0000266"/>
    <property type="project" value="RGD"/>
</dbReference>
<dbReference type="GO" id="GO:0048729">
    <property type="term" value="P:tissue morphogenesis"/>
    <property type="evidence" value="ECO:0000266"/>
    <property type="project" value="RGD"/>
</dbReference>
<dbReference type="GO" id="GO:0001657">
    <property type="term" value="P:ureteric bud development"/>
    <property type="evidence" value="ECO:0000266"/>
    <property type="project" value="RGD"/>
</dbReference>
<dbReference type="CDD" id="cd00071">
    <property type="entry name" value="GMPK"/>
    <property type="match status" value="1"/>
</dbReference>
<dbReference type="CDD" id="cd06723">
    <property type="entry name" value="PDZ1_Dlg1-2-4-like"/>
    <property type="match status" value="1"/>
</dbReference>
<dbReference type="CDD" id="cd06724">
    <property type="entry name" value="PDZ2_Dlg1-2-4-like"/>
    <property type="match status" value="1"/>
</dbReference>
<dbReference type="CDD" id="cd06795">
    <property type="entry name" value="PDZ3_Dlg1-2-4-like"/>
    <property type="match status" value="1"/>
</dbReference>
<dbReference type="CDD" id="cd12031">
    <property type="entry name" value="SH3_DLG1"/>
    <property type="match status" value="1"/>
</dbReference>
<dbReference type="FunFam" id="3.40.50.300:FF:001402">
    <property type="entry name" value="Discs, large homolog 3 (Drosophila)"/>
    <property type="match status" value="1"/>
</dbReference>
<dbReference type="FunFam" id="1.10.287.470:FF:000001">
    <property type="entry name" value="Disks large 1 isoform X3"/>
    <property type="match status" value="1"/>
</dbReference>
<dbReference type="FunFam" id="2.30.30.40:FF:000008">
    <property type="entry name" value="Disks large homolog 1 isoform 2"/>
    <property type="match status" value="1"/>
</dbReference>
<dbReference type="FunFam" id="2.30.42.10:FF:000001">
    <property type="entry name" value="Disks large homolog 1 isoform 2"/>
    <property type="match status" value="1"/>
</dbReference>
<dbReference type="FunFam" id="3.30.63.10:FF:000001">
    <property type="entry name" value="Disks large homolog 1 isoform 2"/>
    <property type="match status" value="1"/>
</dbReference>
<dbReference type="FunFam" id="2.30.30.40:FF:000058">
    <property type="entry name" value="Disks large homolog 1 isoform X1"/>
    <property type="match status" value="1"/>
</dbReference>
<dbReference type="FunFam" id="2.30.42.10:FF:000049">
    <property type="entry name" value="disks large homolog 1 isoform X1"/>
    <property type="match status" value="1"/>
</dbReference>
<dbReference type="FunFam" id="2.30.42.10:FF:000002">
    <property type="entry name" value="Disks large homolog 4 isoform 2"/>
    <property type="match status" value="1"/>
</dbReference>
<dbReference type="Gene3D" id="2.30.42.10">
    <property type="match status" value="3"/>
</dbReference>
<dbReference type="Gene3D" id="3.30.63.10">
    <property type="entry name" value="Guanylate Kinase phosphate binding domain"/>
    <property type="match status" value="1"/>
</dbReference>
<dbReference type="Gene3D" id="1.10.287.470">
    <property type="entry name" value="Helix hairpin bin"/>
    <property type="match status" value="1"/>
</dbReference>
<dbReference type="Gene3D" id="3.40.50.300">
    <property type="entry name" value="P-loop containing nucleotide triphosphate hydrolases"/>
    <property type="match status" value="1"/>
</dbReference>
<dbReference type="Gene3D" id="2.30.30.40">
    <property type="entry name" value="SH3 Domains"/>
    <property type="match status" value="2"/>
</dbReference>
<dbReference type="InterPro" id="IPR019583">
    <property type="entry name" value="DLG1-4_PDZ_assoc"/>
</dbReference>
<dbReference type="InterPro" id="IPR016313">
    <property type="entry name" value="DLG1-like"/>
</dbReference>
<dbReference type="InterPro" id="IPR019590">
    <property type="entry name" value="DLG1_PEST_dom"/>
</dbReference>
<dbReference type="InterPro" id="IPR008145">
    <property type="entry name" value="GK/Ca_channel_bsu"/>
</dbReference>
<dbReference type="InterPro" id="IPR008144">
    <property type="entry name" value="Guanylate_kin-like_dom"/>
</dbReference>
<dbReference type="InterPro" id="IPR020590">
    <property type="entry name" value="Guanylate_kinase_CS"/>
</dbReference>
<dbReference type="InterPro" id="IPR015143">
    <property type="entry name" value="L27_1"/>
</dbReference>
<dbReference type="InterPro" id="IPR004172">
    <property type="entry name" value="L27_dom"/>
</dbReference>
<dbReference type="InterPro" id="IPR036892">
    <property type="entry name" value="L27_dom_sf"/>
</dbReference>
<dbReference type="InterPro" id="IPR027417">
    <property type="entry name" value="P-loop_NTPase"/>
</dbReference>
<dbReference type="InterPro" id="IPR001478">
    <property type="entry name" value="PDZ"/>
</dbReference>
<dbReference type="InterPro" id="IPR036034">
    <property type="entry name" value="PDZ_sf"/>
</dbReference>
<dbReference type="InterPro" id="IPR036028">
    <property type="entry name" value="SH3-like_dom_sf"/>
</dbReference>
<dbReference type="InterPro" id="IPR001452">
    <property type="entry name" value="SH3_domain"/>
</dbReference>
<dbReference type="InterPro" id="IPR050614">
    <property type="entry name" value="Synaptic_Scaffolding_LAP-MAGUK"/>
</dbReference>
<dbReference type="PANTHER" id="PTHR23119">
    <property type="entry name" value="DISCS LARGE"/>
    <property type="match status" value="1"/>
</dbReference>
<dbReference type="PANTHER" id="PTHR23119:SF5">
    <property type="entry name" value="DISKS LARGE HOMOLOG 1"/>
    <property type="match status" value="1"/>
</dbReference>
<dbReference type="Pfam" id="PF00625">
    <property type="entry name" value="Guanylate_kin"/>
    <property type="match status" value="1"/>
</dbReference>
<dbReference type="Pfam" id="PF09058">
    <property type="entry name" value="L27_1"/>
    <property type="match status" value="1"/>
</dbReference>
<dbReference type="Pfam" id="PF10608">
    <property type="entry name" value="MAGUK_N_PEST"/>
    <property type="match status" value="1"/>
</dbReference>
<dbReference type="Pfam" id="PF00595">
    <property type="entry name" value="PDZ"/>
    <property type="match status" value="3"/>
</dbReference>
<dbReference type="Pfam" id="PF10600">
    <property type="entry name" value="PDZ_assoc"/>
    <property type="match status" value="1"/>
</dbReference>
<dbReference type="Pfam" id="PF00018">
    <property type="entry name" value="SH3_1"/>
    <property type="match status" value="1"/>
</dbReference>
<dbReference type="PIRSF" id="PIRSF001741">
    <property type="entry name" value="MAGUK_DLGH"/>
    <property type="match status" value="1"/>
</dbReference>
<dbReference type="SMART" id="SM00072">
    <property type="entry name" value="GuKc"/>
    <property type="match status" value="1"/>
</dbReference>
<dbReference type="SMART" id="SM00569">
    <property type="entry name" value="L27"/>
    <property type="match status" value="1"/>
</dbReference>
<dbReference type="SMART" id="SM01277">
    <property type="entry name" value="MAGUK_N_PEST"/>
    <property type="match status" value="1"/>
</dbReference>
<dbReference type="SMART" id="SM00228">
    <property type="entry name" value="PDZ"/>
    <property type="match status" value="3"/>
</dbReference>
<dbReference type="SMART" id="SM00326">
    <property type="entry name" value="SH3"/>
    <property type="match status" value="1"/>
</dbReference>
<dbReference type="SUPFAM" id="SSF101288">
    <property type="entry name" value="L27 domain"/>
    <property type="match status" value="1"/>
</dbReference>
<dbReference type="SUPFAM" id="SSF52540">
    <property type="entry name" value="P-loop containing nucleoside triphosphate hydrolases"/>
    <property type="match status" value="1"/>
</dbReference>
<dbReference type="SUPFAM" id="SSF50156">
    <property type="entry name" value="PDZ domain-like"/>
    <property type="match status" value="3"/>
</dbReference>
<dbReference type="SUPFAM" id="SSF50044">
    <property type="entry name" value="SH3-domain"/>
    <property type="match status" value="1"/>
</dbReference>
<dbReference type="PROSITE" id="PS00856">
    <property type="entry name" value="GUANYLATE_KINASE_1"/>
    <property type="match status" value="1"/>
</dbReference>
<dbReference type="PROSITE" id="PS50052">
    <property type="entry name" value="GUANYLATE_KINASE_2"/>
    <property type="match status" value="1"/>
</dbReference>
<dbReference type="PROSITE" id="PS51022">
    <property type="entry name" value="L27"/>
    <property type="match status" value="1"/>
</dbReference>
<dbReference type="PROSITE" id="PS50106">
    <property type="entry name" value="PDZ"/>
    <property type="match status" value="3"/>
</dbReference>
<dbReference type="PROSITE" id="PS50002">
    <property type="entry name" value="SH3"/>
    <property type="match status" value="1"/>
</dbReference>
<organism>
    <name type="scientific">Rattus norvegicus</name>
    <name type="common">Rat</name>
    <dbReference type="NCBI Taxonomy" id="10116"/>
    <lineage>
        <taxon>Eukaryota</taxon>
        <taxon>Metazoa</taxon>
        <taxon>Chordata</taxon>
        <taxon>Craniata</taxon>
        <taxon>Vertebrata</taxon>
        <taxon>Euteleostomi</taxon>
        <taxon>Mammalia</taxon>
        <taxon>Eutheria</taxon>
        <taxon>Euarchontoglires</taxon>
        <taxon>Glires</taxon>
        <taxon>Rodentia</taxon>
        <taxon>Myomorpha</taxon>
        <taxon>Muroidea</taxon>
        <taxon>Muridae</taxon>
        <taxon>Murinae</taxon>
        <taxon>Rattus</taxon>
    </lineage>
</organism>
<name>DLG1_RAT</name>
<accession>Q62696</accession>
<feature type="chain" id="PRO_0000094550" description="Disks large homolog 1">
    <location>
        <begin position="1"/>
        <end position="911"/>
    </location>
</feature>
<feature type="domain" description="L27" evidence="8">
    <location>
        <begin position="4"/>
        <end position="64"/>
    </location>
</feature>
<feature type="domain" description="PDZ 1" evidence="6">
    <location>
        <begin position="224"/>
        <end position="310"/>
    </location>
</feature>
<feature type="domain" description="PDZ 2" evidence="6">
    <location>
        <begin position="318"/>
        <end position="404"/>
    </location>
</feature>
<feature type="domain" description="PDZ 3" evidence="6">
    <location>
        <begin position="465"/>
        <end position="545"/>
    </location>
</feature>
<feature type="domain" description="SH3" evidence="7">
    <location>
        <begin position="580"/>
        <end position="650"/>
    </location>
</feature>
<feature type="domain" description="Guanylate kinase-like" evidence="5">
    <location>
        <begin position="721"/>
        <end position="896"/>
    </location>
</feature>
<feature type="region of interest" description="Disordered" evidence="9">
    <location>
        <begin position="70"/>
        <end position="105"/>
    </location>
</feature>
<feature type="region of interest" description="Interaction with SH3 domains" evidence="1">
    <location>
        <begin position="162"/>
        <end position="212"/>
    </location>
</feature>
<feature type="region of interest" description="Required for interaction with MARCHF2" evidence="3">
    <location>
        <begin position="224"/>
        <end position="545"/>
    </location>
</feature>
<feature type="region of interest" description="Disordered" evidence="9">
    <location>
        <begin position="419"/>
        <end position="443"/>
    </location>
</feature>
<feature type="region of interest" description="Disordered" evidence="9">
    <location>
        <begin position="662"/>
        <end position="696"/>
    </location>
</feature>
<feature type="compositionally biased region" description="Polar residues" evidence="9">
    <location>
        <begin position="83"/>
        <end position="96"/>
    </location>
</feature>
<feature type="compositionally biased region" description="Polar residues" evidence="9">
    <location>
        <begin position="419"/>
        <end position="441"/>
    </location>
</feature>
<feature type="modified residue" description="Phosphoserine; by CaMK2" evidence="15">
    <location>
        <position position="39"/>
    </location>
</feature>
<feature type="modified residue" description="Phosphoserine" evidence="30">
    <location>
        <position position="122"/>
    </location>
</feature>
<feature type="modified residue" description="Phosphoserine" evidence="30">
    <location>
        <position position="138"/>
    </location>
</feature>
<feature type="modified residue" description="Phosphoserine" evidence="3">
    <location>
        <position position="158"/>
    </location>
</feature>
<feature type="modified residue" description="Phosphoserine; by CaMK2" evidence="12">
    <location>
        <position position="232"/>
    </location>
</feature>
<feature type="modified residue" description="Phosphotyrosine" evidence="4">
    <location>
        <position position="398"/>
    </location>
</feature>
<feature type="modified residue" description="Phosphoserine" evidence="3">
    <location>
        <position position="567"/>
    </location>
</feature>
<feature type="modified residue" description="Phosphoserine" evidence="3">
    <location>
        <position position="572"/>
    </location>
</feature>
<feature type="modified residue" description="Phosphoserine" evidence="3">
    <location>
        <position position="574"/>
    </location>
</feature>
<feature type="modified residue" description="Phosphoserine" evidence="3">
    <location>
        <position position="578"/>
    </location>
</feature>
<feature type="modified residue" description="Phosphoserine" evidence="4">
    <location>
        <position position="597"/>
    </location>
</feature>
<feature type="modified residue" description="Phosphoserine" evidence="30">
    <location>
        <position position="618"/>
    </location>
</feature>
<feature type="modified residue" description="Phosphoserine" evidence="3">
    <location>
        <position position="684"/>
    </location>
</feature>
<feature type="modified residue" description="Phosphoserine" evidence="3">
    <location>
        <position position="687"/>
    </location>
</feature>
<feature type="modified residue" description="Phosphoserine" evidence="30">
    <location>
        <position position="841"/>
    </location>
</feature>
<feature type="mutagenesis site" description="No enrichment in postsynaptic density upon CaMK2 activation." evidence="15">
    <original>S</original>
    <variation>A</variation>
    <location>
        <position position="39"/>
    </location>
</feature>
<feature type="mutagenesis site" description="Localizes at the postsynaptic density." evidence="15">
    <original>S</original>
    <variation>D</variation>
    <location>
        <position position="39"/>
    </location>
</feature>
<feature type="mutagenesis site" description="No effect on association with GRIN2B." evidence="12">
    <original>S</original>
    <variation>A</variation>
    <location>
        <position position="232"/>
    </location>
</feature>
<feature type="mutagenesis site" description="Partial loss of association with GRIN2B." evidence="12">
    <original>S</original>
    <variation>D</variation>
    <location>
        <position position="232"/>
    </location>
</feature>
<feature type="helix" evidence="31">
    <location>
        <begin position="5"/>
        <end position="20"/>
    </location>
</feature>
<feature type="strand" evidence="31">
    <location>
        <begin position="23"/>
        <end position="26"/>
    </location>
</feature>
<feature type="helix" evidence="31">
    <location>
        <begin position="28"/>
        <end position="42"/>
    </location>
</feature>
<feature type="helix" evidence="31">
    <location>
        <begin position="44"/>
        <end position="52"/>
    </location>
</feature>
<feature type="strand" evidence="31">
    <location>
        <begin position="55"/>
        <end position="61"/>
    </location>
</feature>
<feature type="strand" evidence="32">
    <location>
        <begin position="225"/>
        <end position="227"/>
    </location>
</feature>
<feature type="strand" evidence="32">
    <location>
        <begin position="235"/>
        <end position="239"/>
    </location>
</feature>
<feature type="strand" evidence="32">
    <location>
        <begin position="242"/>
        <end position="246"/>
    </location>
</feature>
<feature type="strand" evidence="32">
    <location>
        <begin position="254"/>
        <end position="258"/>
    </location>
</feature>
<feature type="strand" evidence="32">
    <location>
        <begin position="260"/>
        <end position="262"/>
    </location>
</feature>
<feature type="helix" evidence="32">
    <location>
        <begin position="263"/>
        <end position="267"/>
    </location>
</feature>
<feature type="strand" evidence="32">
    <location>
        <begin position="277"/>
        <end position="279"/>
    </location>
</feature>
<feature type="helix" evidence="32">
    <location>
        <begin position="289"/>
        <end position="297"/>
    </location>
</feature>
<feature type="strand" evidence="32">
    <location>
        <begin position="301"/>
        <end position="306"/>
    </location>
</feature>
<feature type="strand" evidence="34">
    <location>
        <begin position="316"/>
        <end position="322"/>
    </location>
</feature>
<feature type="strand" evidence="34">
    <location>
        <begin position="327"/>
        <end position="334"/>
    </location>
</feature>
<feature type="strand" evidence="34">
    <location>
        <begin position="347"/>
        <end position="352"/>
    </location>
</feature>
<feature type="helix" evidence="34">
    <location>
        <begin position="357"/>
        <end position="361"/>
    </location>
</feature>
<feature type="strand" evidence="34">
    <location>
        <begin position="369"/>
        <end position="373"/>
    </location>
</feature>
<feature type="helix" evidence="34">
    <location>
        <begin position="383"/>
        <end position="391"/>
    </location>
</feature>
<feature type="strand" evidence="34">
    <location>
        <begin position="395"/>
        <end position="402"/>
    </location>
</feature>
<feature type="strand" evidence="33">
    <location>
        <begin position="405"/>
        <end position="407"/>
    </location>
</feature>
<feature type="strand" evidence="35">
    <location>
        <begin position="464"/>
        <end position="469"/>
    </location>
</feature>
<feature type="strand" evidence="35">
    <location>
        <begin position="476"/>
        <end position="481"/>
    </location>
</feature>
<feature type="strand" evidence="35">
    <location>
        <begin position="483"/>
        <end position="486"/>
    </location>
</feature>
<feature type="strand" evidence="35">
    <location>
        <begin position="488"/>
        <end position="493"/>
    </location>
</feature>
<feature type="helix" evidence="35">
    <location>
        <begin position="498"/>
        <end position="502"/>
    </location>
</feature>
<feature type="helix" evidence="35">
    <location>
        <begin position="524"/>
        <end position="532"/>
    </location>
</feature>
<feature type="strand" evidence="35">
    <location>
        <begin position="536"/>
        <end position="542"/>
    </location>
</feature>
<feature type="strand" evidence="36">
    <location>
        <begin position="583"/>
        <end position="587"/>
    </location>
</feature>
<feature type="turn" evidence="36">
    <location>
        <begin position="593"/>
        <end position="595"/>
    </location>
</feature>
<feature type="strand" evidence="36">
    <location>
        <begin position="611"/>
        <end position="616"/>
    </location>
</feature>
<feature type="strand" evidence="36">
    <location>
        <begin position="619"/>
        <end position="628"/>
    </location>
</feature>
<feature type="strand" evidence="36">
    <location>
        <begin position="638"/>
        <end position="641"/>
    </location>
</feature>
<feature type="helix" evidence="36">
    <location>
        <begin position="643"/>
        <end position="651"/>
    </location>
</feature>
<feature type="strand" evidence="36">
    <location>
        <begin position="709"/>
        <end position="717"/>
    </location>
</feature>
<feature type="strand" evidence="36">
    <location>
        <begin position="724"/>
        <end position="728"/>
    </location>
</feature>
<feature type="helix" evidence="36">
    <location>
        <begin position="731"/>
        <end position="741"/>
    </location>
</feature>
<feature type="turn" evidence="36">
    <location>
        <begin position="743"/>
        <end position="745"/>
    </location>
</feature>
<feature type="turn" evidence="36">
    <location>
        <begin position="763"/>
        <end position="765"/>
    </location>
</feature>
<feature type="helix" evidence="36">
    <location>
        <begin position="773"/>
        <end position="781"/>
    </location>
</feature>
<feature type="strand" evidence="36">
    <location>
        <begin position="785"/>
        <end position="791"/>
    </location>
</feature>
<feature type="strand" evidence="36">
    <location>
        <begin position="794"/>
        <end position="799"/>
    </location>
</feature>
<feature type="helix" evidence="36">
    <location>
        <begin position="800"/>
        <end position="807"/>
    </location>
</feature>
<feature type="turn" evidence="36">
    <location>
        <begin position="808"/>
        <end position="810"/>
    </location>
</feature>
<feature type="strand" evidence="36">
    <location>
        <begin position="812"/>
        <end position="815"/>
    </location>
</feature>
<feature type="helix" evidence="36">
    <location>
        <begin position="820"/>
        <end position="827"/>
    </location>
</feature>
<feature type="strand" evidence="36">
    <location>
        <begin position="833"/>
        <end position="837"/>
    </location>
</feature>
<feature type="helix" evidence="36">
    <location>
        <begin position="842"/>
        <end position="848"/>
    </location>
</feature>
<feature type="helix" evidence="36">
    <location>
        <begin position="854"/>
        <end position="871"/>
    </location>
</feature>
<feature type="helix" evidence="36">
    <location>
        <begin position="872"/>
        <end position="874"/>
    </location>
</feature>
<feature type="strand" evidence="36">
    <location>
        <begin position="876"/>
        <end position="879"/>
    </location>
</feature>
<feature type="helix" evidence="36">
    <location>
        <begin position="884"/>
        <end position="898"/>
    </location>
</feature>
<feature type="strand" evidence="36">
    <location>
        <begin position="900"/>
        <end position="906"/>
    </location>
</feature>
<gene>
    <name evidence="29" type="primary">Dlg1</name>
    <name type="synonym">Dlgh1</name>
</gene>
<reference key="1">
    <citation type="journal article" date="1995" name="J. Neurosci.">
        <title>Molecular characterization and spatial distribution of SAP97, a novel presynaptic protein homologous to SAP90 and the Drosophila discs-large tumor suppressor protein.</title>
        <authorList>
            <person name="Mueller B.M."/>
            <person name="Kistner U."/>
            <person name="Veh R.W."/>
            <person name="Cases-Langhoff C."/>
            <person name="Becker B."/>
            <person name="Gundelfinger E.D."/>
            <person name="Garner C.C."/>
        </authorList>
    </citation>
    <scope>NUCLEOTIDE SEQUENCE [MRNA]</scope>
    <scope>TISSUE SPECIFICITY</scope>
    <scope>SUBCELLULAR LOCATION</scope>
    <source>
        <tissue>Brain</tissue>
    </source>
</reference>
<reference key="2">
    <citation type="journal article" date="1997" name="J. Biol. Chem.">
        <title>SAPAPs. A family of PSD-95/SAP90-associated proteins localized at postsynaptic density.</title>
        <authorList>
            <person name="Takeuchi M."/>
            <person name="Hata Y."/>
            <person name="Hirao K."/>
            <person name="Toyoda A."/>
            <person name="Irie M."/>
            <person name="Takai Y."/>
        </authorList>
    </citation>
    <scope>INTERACTION WITH DLGAP1; DLGAP2; DLGAP3 AND DLGAP4</scope>
</reference>
<reference key="3">
    <citation type="journal article" date="1998" name="J. Biol. Chem.">
        <title>SAP97 is associated with the alpha-amino-3-hydroxy-5-methylisoxazole-4-propionic acid receptor GluR1 subunit.</title>
        <authorList>
            <person name="Leonard A.S."/>
            <person name="Davare M.A."/>
            <person name="Horne M.C."/>
            <person name="Garner C.C."/>
            <person name="Hell J.W."/>
        </authorList>
    </citation>
    <scope>INTERACTION WITH GRIA1</scope>
</reference>
<reference key="4">
    <citation type="journal article" date="1998" name="J. Neurosci.">
        <title>Localization of postsynaptic density-93 to dendritic microtubules and interaction with microtubule-associated protein 1A.</title>
        <authorList>
            <person name="Brenman J.E."/>
            <person name="Topinka J.R."/>
            <person name="Cooper E.C."/>
            <person name="McGee A.W."/>
            <person name="Rosen J."/>
            <person name="Milroy T."/>
            <person name="Ralston H.J."/>
            <person name="Bredt D.S."/>
        </authorList>
    </citation>
    <scope>INTERACTION WITH MAP1A</scope>
</reference>
<reference key="5">
    <citation type="journal article" date="2000" name="J. Cell Biol.">
        <title>PSD-95 and SAP97 exhibit distinct mechanisms for regulating K(+) channel surface expression and clustering.</title>
        <authorList>
            <person name="Tiffany A.M."/>
            <person name="Manganas L.N."/>
            <person name="Kim E."/>
            <person name="Hsueh Y.P."/>
            <person name="Sheng M."/>
            <person name="Trimmer J.S."/>
        </authorList>
    </citation>
    <scope>SUBCELLULAR LOCATION</scope>
</reference>
<reference key="6">
    <citation type="journal article" date="2002" name="Mol. Cell. Biol.">
        <title>A novel and conserved protein-protein interaction domain of mammalian Lin-2/CASK binds and recruits SAP97 to the lateral surface of epithelia.</title>
        <authorList>
            <person name="Lee S."/>
            <person name="Fan S."/>
            <person name="Makarova O."/>
            <person name="Straight S."/>
            <person name="Margolis B."/>
        </authorList>
    </citation>
    <scope>INTERACTION WITH CASK</scope>
    <scope>SUBCELLULAR LOCATION</scope>
</reference>
<reference key="7">
    <citation type="journal article" date="2003" name="Dev. Biol.">
        <title>Brain-derived neurotrophic factor signal enhances and maintains the expression of AMPA receptor-associated PDZ proteins in developing cortical neurons.</title>
        <authorList>
            <person name="Jourdi H."/>
            <person name="Iwakura Y."/>
            <person name="Narisawa-Saito M."/>
            <person name="Ibaraki K."/>
            <person name="Xiong H."/>
            <person name="Watanabe M."/>
            <person name="Hayashi Y."/>
            <person name="Takei N."/>
            <person name="Nawa H."/>
        </authorList>
    </citation>
    <scope>INDUCTION BY BDNF</scope>
</reference>
<reference key="8">
    <citation type="journal article" date="2003" name="J. Biol. Chem.">
        <title>CaMKII-dependent phosphorylation regulates SAP97/NR2A interaction.</title>
        <authorList>
            <person name="Gardoni F."/>
            <person name="Mauceri D."/>
            <person name="Fiorentini C."/>
            <person name="Bellone C."/>
            <person name="Missale C."/>
            <person name="Cattabeni F."/>
            <person name="Di Luca M."/>
        </authorList>
    </citation>
    <scope>MUTAGENESIS OF SER-232</scope>
    <scope>PHOSPHORYLATION AT SER-232</scope>
    <scope>INTERACTION WITH GRIN2A</scope>
</reference>
<reference key="9">
    <citation type="journal article" date="2004" name="J. Biol. Chem.">
        <title>A multiprotein trafficking complex composed of SAP97, CASK, Veli, and Mint1 is associated with inward rectifier Kir2 potassium channels.</title>
        <authorList>
            <person name="Leonoudakis D."/>
            <person name="Conti L.R."/>
            <person name="Radeke C.M."/>
            <person name="McGuire L.M."/>
            <person name="Vandenberg C.A."/>
        </authorList>
    </citation>
    <scope>INTERACTION WITH CASK; LIN7A; LIN7B; LIN7C; APBA1 AND KCNJ12</scope>
    <scope>FUNCTION</scope>
</reference>
<reference key="10">
    <citation type="journal article" date="2004" name="J. Biol. Chem.">
        <title>Calcium/calmodulin-dependent protein kinase II phosphorylation drives synapse-associated protein 97 into spines.</title>
        <authorList>
            <person name="Mauceri D."/>
            <person name="Cattabeni F."/>
            <person name="Di Luca M."/>
            <person name="Gardoni F."/>
        </authorList>
    </citation>
    <scope>MUTAGENESIS OF SER-39</scope>
    <scope>PHOSPHORYLATION AT SER-39</scope>
    <scope>SUBCELLULAR LOCATION</scope>
    <scope>FUNCTION</scope>
</reference>
<reference key="11">
    <citation type="journal article" date="2004" name="Neuron">
        <title>Quaternary structure, protein dynamics, and synaptic function of SAP97 controlled by L27 domain interactions.</title>
        <authorList>
            <person name="Nakagawa T."/>
            <person name="Futai K."/>
            <person name="Lashuel H.A."/>
            <person name="Lo I."/>
            <person name="Okamoto K."/>
            <person name="Walz T."/>
            <person name="Hayashi Y."/>
            <person name="Sheng M."/>
        </authorList>
    </citation>
    <scope>FUNCTION</scope>
</reference>
<reference key="12">
    <citation type="journal article" date="2005" name="J. Biol. Chem.">
        <title>Binding of PTEN to specific PDZ domains contributes to PTEN protein stability and phosphorylation by microtubule-associated serine/threonine kinases.</title>
        <authorList>
            <person name="Valiente M."/>
            <person name="Andres-Pons A."/>
            <person name="Gomar B."/>
            <person name="Torres J."/>
            <person name="Gil A."/>
            <person name="Tapparel C."/>
            <person name="Antonarakis S.E."/>
            <person name="Pulido R."/>
        </authorList>
    </citation>
    <scope>INTERACTION WITH PTEN</scope>
</reference>
<reference key="13">
    <citation type="journal article" date="2006" name="J. Neurosci.">
        <title>A novel family of adhesion-like molecules that interacts with the NMDA receptor.</title>
        <authorList>
            <person name="Wang C.Y."/>
            <person name="Chang K."/>
            <person name="Petralia R.S."/>
            <person name="Wang Y.X."/>
            <person name="Seabold G.K."/>
            <person name="Wenthold R.J."/>
        </authorList>
    </citation>
    <scope>INTERACTION WITH LRFN2</scope>
</reference>
<reference key="14">
    <citation type="journal article" date="2006" name="Neuron">
        <title>SALM synaptic cell adhesion-like molecules regulate the differentiation of excitatory synapses.</title>
        <authorList>
            <person name="Ko J."/>
            <person name="Kim S."/>
            <person name="Chung H.S."/>
            <person name="Kim K."/>
            <person name="Han K."/>
            <person name="Kim H."/>
            <person name="Jun H."/>
            <person name="Kaang B.-K."/>
            <person name="Kim E."/>
        </authorList>
    </citation>
    <scope>INTERACTION WITH LRFN1</scope>
</reference>
<reference key="15">
    <citation type="journal article" date="2008" name="Cell. Signal.">
        <title>DLG1 is an anchor for the E3 ligase MARCH2 at sites of cell-cell contact.</title>
        <authorList>
            <person name="Cao Z."/>
            <person name="Huett A."/>
            <person name="Kuballa P."/>
            <person name="Giallourakis C."/>
            <person name="Xavier R.J."/>
        </authorList>
    </citation>
    <scope>SUBCELLULAR LOCATION</scope>
</reference>
<reference key="16">
    <citation type="journal article" date="2008" name="J. Neurosci.">
        <title>Preso, a novel PSD-95-interacting FERM and PDZ domain protein that regulates dendritic spine morphogenesis.</title>
        <authorList>
            <person name="Lee H.W."/>
            <person name="Choi J."/>
            <person name="Shin H."/>
            <person name="Kim K."/>
            <person name="Yang J."/>
            <person name="Na M."/>
            <person name="Choi S.Y."/>
            <person name="Kang G.B."/>
            <person name="Eom S.H."/>
            <person name="Kim H."/>
            <person name="Kim E."/>
        </authorList>
    </citation>
    <scope>INTERACTION WITH FRMPD4</scope>
</reference>
<reference key="17">
    <citation type="journal article" date="2009" name="Circ. Res.">
        <title>Kv4 potassium channels form a tripartite complex with the anchoring protein SAP97 and CaMKII in cardiac myocytes.</title>
        <authorList>
            <person name="El-Haou S."/>
            <person name="Balse E."/>
            <person name="Neyroud N."/>
            <person name="Dilanian G."/>
            <person name="Gavillet B."/>
            <person name="Abriel H."/>
            <person name="Coulombe A."/>
            <person name="Jeromin A."/>
            <person name="Hatem S.N."/>
        </authorList>
    </citation>
    <scope>FUNCTION</scope>
    <scope>TISSUE SPECIFICITY</scope>
    <scope>SUBCELLULAR LOCATION</scope>
    <scope>INTERACTION WITH KCND2; KCND3 AND CAMK2</scope>
</reference>
<reference key="18">
    <citation type="journal article" date="2011" name="EMBO J.">
        <title>DGKiota regulates presynaptic release during mGluR-dependent LTD.</title>
        <authorList>
            <person name="Yang J."/>
            <person name="Seo J."/>
            <person name="Nair R."/>
            <person name="Han S."/>
            <person name="Jang S."/>
            <person name="Kim K."/>
            <person name="Han K."/>
            <person name="Paik S.K."/>
            <person name="Choi J."/>
            <person name="Lee S."/>
            <person name="Bae Y.C."/>
            <person name="Topham M.K."/>
            <person name="Prescott S.M."/>
            <person name="Rhee J.S."/>
            <person name="Choi S.Y."/>
            <person name="Kim E."/>
        </authorList>
    </citation>
    <scope>INTERACTION WITH DGKI</scope>
</reference>
<reference key="19">
    <citation type="journal article" date="2012" name="Nat. Commun.">
        <title>Quantitative maps of protein phosphorylation sites across 14 different rat organs and tissues.</title>
        <authorList>
            <person name="Lundby A."/>
            <person name="Secher A."/>
            <person name="Lage K."/>
            <person name="Nordsborg N.B."/>
            <person name="Dmytriyev A."/>
            <person name="Lundby C."/>
            <person name="Olsen J.V."/>
        </authorList>
    </citation>
    <scope>PHOSPHORYLATION [LARGE SCALE ANALYSIS] AT SER-122; SER-138; SER-618 AND SER-841</scope>
    <scope>IDENTIFICATION BY MASS SPECTROMETRY [LARGE SCALE ANALYSIS]</scope>
</reference>
<comment type="function">
    <text evidence="1 2 3 4 14 15 16 22">Essential multidomain scaffolding protein required for normal development (By similarity). Recruits channels, receptors and signaling molecules to discrete plasma membrane domains in polarized cells. Promotes epithelial cell layer barrier function via maintaining cell-cell adhesion (By similarity). May play a role in adherens junction assembly, signal transduction, cell proliferation, synaptogenesis and lymphocyte activation. Regulates the excitability of cardiac myocytes by modulating the functional expression of Kv4 channels. Functional regulator of Kv1.5 channel (By similarity). During long-term depression in hippocampal neurons, it recruits ADAM10 to the plasma membrane (By similarity).</text>
</comment>
<comment type="subunit">
    <text evidence="3 4 11 12 14 17 18 19 21 22 23 25 26 27 28">Homotetramer (By similarity). Interacts (via guanylate kinase-like domain) with DLGAP1, DLGAP2, DLGAP3, DLGAP4 and MAP1A (PubMed:9115257, PubMed:9786987). Interacts (via guanylate kinase-like domain) with KIF13B (By similarity). May interact with HTR2A (By similarity). Interacts (via PDZ domains) with GRIA1 (PubMed:9677374). Interacts (via PDZ domains) with GRIN2A (PubMed:12933808). Interacts (via PDZ domains) with KCND2 and KCND3 (PubMed:19213956). Interacts (via PDZ domains) with KCNA1, KCNA2, KCNA3 and KCNA4 (By similarity). Interacts (via PDZ domains) with ADGRA3 (By similarity). Interacts with KCNF1 (By similarity). Interacts with CAMK2 (PubMed:19213956). Interacts with cytoskeleton-associated protein EPB41 (By similarity). Interacts with cytoskeleton-associated protein EZR (By similarity). Found in a complex with KCNA5 and CAV3 (By similarity). Found in a complex with APC and CTNNB1 (By similarity). Interacts (via PDZ domains) with APC (By similarity). Interacts with CDH1 through binding to PIK3R1 (By similarity). Forms multiprotein complexes with CASK, LIN7A, LIN7B, LIN7C, APBA1, and KCNJ12 (PubMed:11865057, PubMed:14960569). Interacts with TOPK (By similarity). Forms a tripartite complex composed of DLG1, MPP7 and LIN7 (LIN7A or LIN7C) (By similarity). May interact with TJAP1 (By similarity). Interacts with PTEN (PubMed:15951562). Interacts with FRMPD4 (via C-terminus) (PubMed:19118189). Interacts with LRFN1 and LRFN2 (PubMed:16495444, PubMed:16630835). Interacts with LRFN4 and SFPQ (By similarity). Interacts (via PDZ domains) with ADGRA2 (via PDZ-binding motif) (By similarity). Interacts with ADAM10; this interaction recruits ADAM10 to the cell membrane during long-term depression in hippocampal neurons (By similarity). Interacts with DGKI (via PDZ-binding motif) (PubMed:21119615). Interacts (via PDZ domains) with MARCHF2 (via PDZ domain); the interaction leads to DLG1 ubiqtuitination and degradation (By similarity). Interacts (via N-terminus) with MPP3; this interaction connects CADM1 with DLG1 and links CADM1 with the regulatory subunit of phosphoinositide-3-kinase (PI3K) by forming a multiprotein complex and participates in cell spreading (By similarity).</text>
</comment>
<comment type="interaction">
    <interactant intactId="EBI-389325">
        <id>Q62696</id>
    </interactant>
    <interactant intactId="EBI-8523614">
        <id>F1MAB7</id>
        <label>Dgki</label>
    </interactant>
    <organismsDiffer>false</organismsDiffer>
    <experiments>3</experiments>
</comment>
<comment type="interaction">
    <interactant intactId="EBI-389325">
        <id>Q62696</id>
    </interactant>
    <interactant intactId="EBI-8570505">
        <id>O08560</id>
        <label>Dgkz</label>
    </interactant>
    <organismsDiffer>false</organismsDiffer>
    <experiments>4</experiments>
</comment>
<comment type="interaction">
    <interactant intactId="EBI-389325">
        <id>Q62696</id>
    </interactant>
    <interactant intactId="EBI-375655">
        <id>P31016</id>
        <label>Dlg4</label>
    </interactant>
    <organismsDiffer>false</organismsDiffer>
    <experiments>3</experiments>
</comment>
<comment type="interaction">
    <interactant intactId="EBI-389325">
        <id>Q62696</id>
    </interactant>
    <interactant intactId="EBI-703577">
        <id>Q64273</id>
        <label>Kcnj2</label>
    </interactant>
    <organismsDiffer>false</organismsDiffer>
    <experiments>3</experiments>
</comment>
<comment type="interaction">
    <interactant intactId="EBI-389325">
        <id>Q62696</id>
    </interactant>
    <interactant intactId="EBI-877185">
        <id>Q460M5</id>
        <label>Lrfn2</label>
    </interactant>
    <organismsDiffer>false</organismsDiffer>
    <experiments>2</experiments>
</comment>
<comment type="interaction">
    <interactant intactId="EBI-389325">
        <id>Q62696</id>
    </interactant>
    <interactant intactId="EBI-631571">
        <id>P34926</id>
        <label>Map1a</label>
    </interactant>
    <organismsDiffer>false</organismsDiffer>
    <experiments>2</experiments>
</comment>
<comment type="interaction">
    <interactant intactId="EBI-389325">
        <id>Q62696</id>
    </interactant>
    <interactant intactId="EBI-307461">
        <id>Q9Y297</id>
        <label>BTRC</label>
    </interactant>
    <organismsDiffer>true</organismsDiffer>
    <experiments>3</experiments>
</comment>
<comment type="interaction">
    <interactant intactId="EBI-389325">
        <id>Q62696</id>
    </interactant>
    <interactant intactId="EBI-16879653">
        <id>P35347</id>
        <label>Crhr1</label>
    </interactant>
    <organismsDiffer>true</organismsDiffer>
    <experiments>3</experiments>
</comment>
<comment type="interaction">
    <interactant intactId="EBI-389325">
        <id>Q62696</id>
    </interactant>
    <interactant intactId="EBI-1753207">
        <id>O14490</id>
        <label>DLGAP1</label>
    </interactant>
    <organismsDiffer>true</organismsDiffer>
    <experiments>2</experiments>
</comment>
<comment type="interaction">
    <interactant intactId="EBI-389325">
        <id>Q62696</id>
    </interactant>
    <interactant intactId="EBI-7401124">
        <id>P89079</id>
        <label>E4</label>
    </interactant>
    <organismsDiffer>true</organismsDiffer>
    <experiments>4</experiments>
</comment>
<comment type="interaction">
    <interactant intactId="EBI-389325">
        <id>Q62696</id>
    </interactant>
    <interactant intactId="EBI-7575403">
        <id>Q8VDU0</id>
        <label>Gpsm2</label>
    </interactant>
    <organismsDiffer>true</organismsDiffer>
    <experiments>7</experiments>
</comment>
<comment type="interaction">
    <interactant intactId="EBI-389325">
        <id>Q62696</id>
    </interactant>
    <interactant intactId="EBI-9085496">
        <id>E9Q4K7</id>
        <label>Kif13b</label>
    </interactant>
    <organismsDiffer>true</organismsDiffer>
    <experiments>2</experiments>
</comment>
<comment type="interaction">
    <interactant intactId="EBI-389325">
        <id>Q62696</id>
    </interactant>
    <interactant intactId="EBI-696162">
        <id>P60484</id>
        <label>PTEN</label>
    </interactant>
    <organismsDiffer>true</organismsDiffer>
    <experiments>2</experiments>
</comment>
<comment type="interaction">
    <interactant intactId="EBI-389325">
        <id>Q62696</id>
    </interactant>
    <interactant intactId="EBI-8068354">
        <id>B1AYL1</id>
        <label>Scn7a</label>
    </interactant>
    <organismsDiffer>true</organismsDiffer>
    <experiments>3</experiments>
</comment>
<comment type="subcellular location">
    <subcellularLocation>
        <location evidence="22">Cell membrane</location>
        <topology evidence="3">Peripheral membrane protein</topology>
    </subcellularLocation>
    <subcellularLocation>
        <location evidence="11">Basolateral cell membrane</location>
    </subcellularLocation>
    <subcellularLocation>
        <location evidence="10 15">Endoplasmic reticulum membrane</location>
    </subcellularLocation>
    <subcellularLocation>
        <location evidence="15">Postsynaptic density</location>
    </subcellularLocation>
    <subcellularLocation>
        <location evidence="10">Synapse</location>
    </subcellularLocation>
    <subcellularLocation>
        <location evidence="22">Cell membrane</location>
        <location evidence="22">Sarcolemma</location>
    </subcellularLocation>
    <subcellularLocation>
        <location evidence="20">Cell junction</location>
    </subcellularLocation>
    <subcellularLocation>
        <location evidence="3">Cytoplasm</location>
    </subcellularLocation>
    <subcellularLocation>
        <location evidence="3">Apical cell membrane</location>
    </subcellularLocation>
    <text evidence="3 10 11 15">Colocalizes with EPB41 at regions of intercellular contacts. Basolateral in epithelial cells (PubMed:11865057). May also associate with endoplasmic reticulum membranes (PubMed:10629225, PubMed:15044483). Mainly found in neurons soma, moderately found at postsynaptic densities (PubMed:15044483).</text>
</comment>
<comment type="tissue specificity">
    <text evidence="22 24">Widely expressed. Strongly expressed in epithelial cells, in the small intestine it is only detected in the vili. Expressed in brain, heart (at protein level), muscle, lung and liver. In the brain it was detected in olfactory bulbs, cerebral cortex, hippocampus, and spinal cord (at protein level).</text>
</comment>
<comment type="induction">
    <text evidence="13">By BDNF.</text>
</comment>
<comment type="domain">
    <text evidence="3">The PDZ domains may also mediate association to membranes by binding to EPB41 and ADGRA2 together with the L27 domain that binds CASK and DLG2.</text>
</comment>
<comment type="domain">
    <text evidence="3">The L27 domain may regulate DLG1 self-association. The N-terminal alternatively spliced region is capable of binding several SH3 domains and also moderates the level of protein oligomerization.</text>
</comment>
<comment type="PTM">
    <text evidence="3 12 15">Phosphorylated by MAPK12 (By similarity). Phosphorylation of Ser-39 modulates transport to the plasma membrane (PubMed:15044483). Phosphorylation of Ser-232 regulates association with GRIN2A (PubMed:12933808).</text>
</comment>
<comment type="PTM">
    <text evidence="3">Ubiquitinated; by MARCHF2 which results in its degradation.</text>
</comment>
<comment type="similarity">
    <text evidence="28">Belongs to the MAGUK family.</text>
</comment>
<proteinExistence type="evidence at protein level"/>
<sequence length="911" mass="100571">MPVRKQDTQRALHLLEEYRSKLSQTEDRQLRSSIERVISIFQSNLFQALIDIQEFYEVTLLDNPKCVDHSKQCEPVQPGNPWESGSLSSAAVTSESLPGGLSPPVEKYRYQDEEVLPSERISPQVPNEVLGPELVHVSEKSLSEIENVHGFVSHSHISPIKPTEAVPPSSPIVPVTPALPVPAESPVVLPSTPQANPPPVLVNTDSLETPTYVNGTDADYEYEEITLERGNSGLGFSIAGGTDNPHIGDDSSIFITKIITGGAAAQDGRLRVNDCILRVNEADVRDVTHSKAVEALKEAGSIVRLYVKRRKAFRKNHEIKLIKGPKGLGFSIAGGVGNQHIPGDNSIYVTKIIEGGAAHKDGKLQIGDKLLAVNSVCLEEVTHEEAVTALKNTSDFVYLKAAKPTSMYINDGYAPPDITNSSSQSVDNHVSPSSYLGQTPASPARYSPISKAVLGDDEITREPRKVVLHRGSTGLGFNIVGGEDGEGIFISFILAGGPADLSGELRKGDRIISVNSVDLRAASHEQAAAALKNAGQAVTIVAQYRPEEYSRFEAKIHDLRETMMNSSVSSGSGSLRTSQKRSLYVRALFDYDKTKDSGLPSQGLNFKFGDILHVINASDDEWWQARQVTPDGESDEVGVIPSKRRVEKKERARLKTVKFNSKTRGDKGEIPDDMGSKGLKHVTSNASDSESSYHEYGCSKGGQEEYVLSYEPVNQQEVNYTRPVIILGPMKDRVNDDLISEFPDKFGSCVPHTTRPKRDYEVDGRDYHFVTSREQMEKDIQEHKFIEAGQYNNHLYGTSVQSVRAVAEKGKHCILDVSGNAIKRLQIAQLYPISIFIKPKSMENIMEMNKRLTDEQARKTFERAVRLEQEFTEHFTAIVQGDTLEDIYNQVKQIIEEQSGPYIWVPAKEKL</sequence>
<evidence type="ECO:0000250" key="1"/>
<evidence type="ECO:0000250" key="2">
    <source>
        <dbReference type="UniProtKB" id="A0A8C0TYJ0"/>
    </source>
</evidence>
<evidence type="ECO:0000250" key="3">
    <source>
        <dbReference type="UniProtKB" id="Q12959"/>
    </source>
</evidence>
<evidence type="ECO:0000250" key="4">
    <source>
        <dbReference type="UniProtKB" id="Q811D0"/>
    </source>
</evidence>
<evidence type="ECO:0000255" key="5">
    <source>
        <dbReference type="PROSITE-ProRule" id="PRU00100"/>
    </source>
</evidence>
<evidence type="ECO:0000255" key="6">
    <source>
        <dbReference type="PROSITE-ProRule" id="PRU00143"/>
    </source>
</evidence>
<evidence type="ECO:0000255" key="7">
    <source>
        <dbReference type="PROSITE-ProRule" id="PRU00192"/>
    </source>
</evidence>
<evidence type="ECO:0000255" key="8">
    <source>
        <dbReference type="PROSITE-ProRule" id="PRU00365"/>
    </source>
</evidence>
<evidence type="ECO:0000256" key="9">
    <source>
        <dbReference type="SAM" id="MobiDB-lite"/>
    </source>
</evidence>
<evidence type="ECO:0000269" key="10">
    <source>
    </source>
</evidence>
<evidence type="ECO:0000269" key="11">
    <source>
    </source>
</evidence>
<evidence type="ECO:0000269" key="12">
    <source>
    </source>
</evidence>
<evidence type="ECO:0000269" key="13">
    <source>
    </source>
</evidence>
<evidence type="ECO:0000269" key="14">
    <source>
    </source>
</evidence>
<evidence type="ECO:0000269" key="15">
    <source>
    </source>
</evidence>
<evidence type="ECO:0000269" key="16">
    <source>
    </source>
</evidence>
<evidence type="ECO:0000269" key="17">
    <source>
    </source>
</evidence>
<evidence type="ECO:0000269" key="18">
    <source>
    </source>
</evidence>
<evidence type="ECO:0000269" key="19">
    <source>
    </source>
</evidence>
<evidence type="ECO:0000269" key="20">
    <source>
    </source>
</evidence>
<evidence type="ECO:0000269" key="21">
    <source>
    </source>
</evidence>
<evidence type="ECO:0000269" key="22">
    <source>
    </source>
</evidence>
<evidence type="ECO:0000269" key="23">
    <source>
    </source>
</evidence>
<evidence type="ECO:0000269" key="24">
    <source>
    </source>
</evidence>
<evidence type="ECO:0000269" key="25">
    <source>
    </source>
</evidence>
<evidence type="ECO:0000269" key="26">
    <source>
    </source>
</evidence>
<evidence type="ECO:0000269" key="27">
    <source>
    </source>
</evidence>
<evidence type="ECO:0000305" key="28"/>
<evidence type="ECO:0000312" key="29">
    <source>
        <dbReference type="RGD" id="2505"/>
    </source>
</evidence>
<evidence type="ECO:0007744" key="30">
    <source>
    </source>
</evidence>
<evidence type="ECO:0007829" key="31">
    <source>
        <dbReference type="PDB" id="1RSO"/>
    </source>
</evidence>
<evidence type="ECO:0007829" key="32">
    <source>
        <dbReference type="PDB" id="1ZOK"/>
    </source>
</evidence>
<evidence type="ECO:0007829" key="33">
    <source>
        <dbReference type="PDB" id="2AWU"/>
    </source>
</evidence>
<evidence type="ECO:0007829" key="34">
    <source>
        <dbReference type="PDB" id="2AWX"/>
    </source>
</evidence>
<evidence type="ECO:0007829" key="35">
    <source>
        <dbReference type="PDB" id="2I0I"/>
    </source>
</evidence>
<evidence type="ECO:0007829" key="36">
    <source>
        <dbReference type="PDB" id="3UAT"/>
    </source>
</evidence>